<dbReference type="EMBL" id="Y17586">
    <property type="protein sequence ID" value="CAA76798.1"/>
    <property type="molecule type" value="mRNA"/>
</dbReference>
<dbReference type="SMR" id="O93441"/>
<dbReference type="GlyCosmos" id="O93441">
    <property type="glycosylation" value="3 sites, No reported glycans"/>
</dbReference>
<dbReference type="GO" id="GO:0016020">
    <property type="term" value="C:membrane"/>
    <property type="evidence" value="ECO:0000250"/>
    <property type="project" value="UniProtKB"/>
</dbReference>
<dbReference type="GO" id="GO:0097381">
    <property type="term" value="C:photoreceptor disc membrane"/>
    <property type="evidence" value="ECO:0000250"/>
    <property type="project" value="UniProtKB"/>
</dbReference>
<dbReference type="GO" id="GO:0005886">
    <property type="term" value="C:plasma membrane"/>
    <property type="evidence" value="ECO:0000250"/>
    <property type="project" value="UniProtKB"/>
</dbReference>
<dbReference type="GO" id="GO:0005502">
    <property type="term" value="F:11-cis retinal binding"/>
    <property type="evidence" value="ECO:0000250"/>
    <property type="project" value="UniProtKB"/>
</dbReference>
<dbReference type="GO" id="GO:0008020">
    <property type="term" value="F:G protein-coupled photoreceptor activity"/>
    <property type="evidence" value="ECO:0000250"/>
    <property type="project" value="UniProtKB"/>
</dbReference>
<dbReference type="GO" id="GO:0016038">
    <property type="term" value="P:absorption of visible light"/>
    <property type="evidence" value="ECO:0000250"/>
    <property type="project" value="UniProtKB"/>
</dbReference>
<dbReference type="GO" id="GO:0016056">
    <property type="term" value="P:G protein-coupled opsin signaling pathway"/>
    <property type="evidence" value="ECO:0000250"/>
    <property type="project" value="UniProtKB"/>
</dbReference>
<dbReference type="GO" id="GO:0007601">
    <property type="term" value="P:visual perception"/>
    <property type="evidence" value="ECO:0007669"/>
    <property type="project" value="UniProtKB-KW"/>
</dbReference>
<dbReference type="CDD" id="cd15080">
    <property type="entry name" value="7tmA_MWS_opsin"/>
    <property type="match status" value="1"/>
</dbReference>
<dbReference type="FunFam" id="1.20.1070.10:FF:000018">
    <property type="entry name" value="Rhodopsin"/>
    <property type="match status" value="1"/>
</dbReference>
<dbReference type="Gene3D" id="1.20.1070.10">
    <property type="entry name" value="Rhodopsin 7-helix transmembrane proteins"/>
    <property type="match status" value="1"/>
</dbReference>
<dbReference type="InterPro" id="IPR050125">
    <property type="entry name" value="GPCR_opsins"/>
</dbReference>
<dbReference type="InterPro" id="IPR000276">
    <property type="entry name" value="GPCR_Rhodpsn"/>
</dbReference>
<dbReference type="InterPro" id="IPR017452">
    <property type="entry name" value="GPCR_Rhodpsn_7TM"/>
</dbReference>
<dbReference type="InterPro" id="IPR001760">
    <property type="entry name" value="Opsin"/>
</dbReference>
<dbReference type="InterPro" id="IPR027430">
    <property type="entry name" value="Retinal_BS"/>
</dbReference>
<dbReference type="InterPro" id="IPR000732">
    <property type="entry name" value="Rhodopsin"/>
</dbReference>
<dbReference type="InterPro" id="IPR019477">
    <property type="entry name" value="Rhodopsin_N"/>
</dbReference>
<dbReference type="PANTHER" id="PTHR24240">
    <property type="entry name" value="OPSIN"/>
    <property type="match status" value="1"/>
</dbReference>
<dbReference type="Pfam" id="PF00001">
    <property type="entry name" value="7tm_1"/>
    <property type="match status" value="1"/>
</dbReference>
<dbReference type="Pfam" id="PF10413">
    <property type="entry name" value="Rhodopsin_N"/>
    <property type="match status" value="1"/>
</dbReference>
<dbReference type="PRINTS" id="PR00237">
    <property type="entry name" value="GPCRRHODOPSN"/>
</dbReference>
<dbReference type="PRINTS" id="PR00238">
    <property type="entry name" value="OPSIN"/>
</dbReference>
<dbReference type="PRINTS" id="PR00579">
    <property type="entry name" value="RHODOPSIN"/>
</dbReference>
<dbReference type="SUPFAM" id="SSF81321">
    <property type="entry name" value="Family A G protein-coupled receptor-like"/>
    <property type="match status" value="1"/>
</dbReference>
<dbReference type="PROSITE" id="PS00237">
    <property type="entry name" value="G_PROTEIN_RECEP_F1_1"/>
    <property type="match status" value="1"/>
</dbReference>
<dbReference type="PROSITE" id="PS50262">
    <property type="entry name" value="G_PROTEIN_RECEP_F1_2"/>
    <property type="match status" value="1"/>
</dbReference>
<dbReference type="PROSITE" id="PS00238">
    <property type="entry name" value="OPSIN"/>
    <property type="match status" value="1"/>
</dbReference>
<gene>
    <name type="primary">rho</name>
</gene>
<organism>
    <name type="scientific">Galeus melastomus</name>
    <name type="common">Blackmouth catshark</name>
    <dbReference type="NCBI Taxonomy" id="77914"/>
    <lineage>
        <taxon>Eukaryota</taxon>
        <taxon>Metazoa</taxon>
        <taxon>Chordata</taxon>
        <taxon>Craniata</taxon>
        <taxon>Vertebrata</taxon>
        <taxon>Chondrichthyes</taxon>
        <taxon>Elasmobranchii</taxon>
        <taxon>Galeomorphii</taxon>
        <taxon>Galeoidea</taxon>
        <taxon>Carcharhiniformes</taxon>
        <taxon>Scyliorhinidae</taxon>
        <taxon>Galeus</taxon>
    </lineage>
</organism>
<accession>O93441</accession>
<name>OPSD_GALML</name>
<feature type="chain" id="PRO_0000197673" description="Rhodopsin">
    <location>
        <begin position="1"/>
        <end position="354"/>
    </location>
</feature>
<feature type="topological domain" description="Extracellular" evidence="8">
    <location>
        <begin position="1"/>
        <end position="36"/>
    </location>
</feature>
<feature type="transmembrane region" description="Helical; Name=1" evidence="1">
    <location>
        <begin position="37"/>
        <end position="61"/>
    </location>
</feature>
<feature type="topological domain" description="Cytoplasmic" evidence="8">
    <location>
        <begin position="62"/>
        <end position="73"/>
    </location>
</feature>
<feature type="transmembrane region" description="Helical; Name=2" evidence="1">
    <location>
        <begin position="74"/>
        <end position="96"/>
    </location>
</feature>
<feature type="topological domain" description="Extracellular" evidence="8">
    <location>
        <begin position="97"/>
        <end position="110"/>
    </location>
</feature>
<feature type="transmembrane region" description="Helical; Name=3" evidence="1">
    <location>
        <begin position="111"/>
        <end position="133"/>
    </location>
</feature>
<feature type="topological domain" description="Cytoplasmic" evidence="8">
    <location>
        <begin position="134"/>
        <end position="152"/>
    </location>
</feature>
<feature type="transmembrane region" description="Helical; Name=4" evidence="1">
    <location>
        <begin position="153"/>
        <end position="173"/>
    </location>
</feature>
<feature type="topological domain" description="Extracellular" evidence="8">
    <location>
        <begin position="174"/>
        <end position="202"/>
    </location>
</feature>
<feature type="transmembrane region" description="Helical; Name=5" evidence="1">
    <location>
        <begin position="203"/>
        <end position="224"/>
    </location>
</feature>
<feature type="topological domain" description="Cytoplasmic" evidence="8">
    <location>
        <begin position="225"/>
        <end position="252"/>
    </location>
</feature>
<feature type="transmembrane region" description="Helical; Name=6" evidence="1">
    <location>
        <begin position="253"/>
        <end position="274"/>
    </location>
</feature>
<feature type="topological domain" description="Extracellular" evidence="8">
    <location>
        <begin position="275"/>
        <end position="286"/>
    </location>
</feature>
<feature type="transmembrane region" description="Helical; Name=7" evidence="1">
    <location>
        <begin position="287"/>
        <end position="308"/>
    </location>
</feature>
<feature type="topological domain" description="Cytoplasmic" evidence="8">
    <location>
        <begin position="309"/>
        <end position="354"/>
    </location>
</feature>
<feature type="region of interest" description="Disordered" evidence="7">
    <location>
        <begin position="333"/>
        <end position="354"/>
    </location>
</feature>
<feature type="short sequence motif" description="'Ionic lock' involved in activated form stabilization" evidence="1">
    <location>
        <begin position="134"/>
        <end position="136"/>
    </location>
</feature>
<feature type="compositionally biased region" description="Low complexity" evidence="7">
    <location>
        <begin position="334"/>
        <end position="354"/>
    </location>
</feature>
<feature type="site" description="Plays an important role in the conformation switch to the active conformation" evidence="1">
    <location>
        <position position="113"/>
    </location>
</feature>
<feature type="modified residue" description="N6-(retinylidene)lysine" evidence="1">
    <location>
        <position position="296"/>
    </location>
</feature>
<feature type="lipid moiety-binding region" description="S-palmitoyl cysteine" evidence="1">
    <location>
        <position position="322"/>
    </location>
</feature>
<feature type="lipid moiety-binding region" description="S-palmitoyl cysteine" evidence="1">
    <location>
        <position position="323"/>
    </location>
</feature>
<feature type="glycosylation site" description="N-linked (GlcNAc...) asparagine" evidence="5">
    <location>
        <position position="2"/>
    </location>
</feature>
<feature type="glycosylation site" description="N-linked (GlcNAc...) asparagine" evidence="5">
    <location>
        <position position="15"/>
    </location>
</feature>
<feature type="glycosylation site" description="N-linked (GlcNAc...) asparagine" evidence="5">
    <location>
        <position position="200"/>
    </location>
</feature>
<feature type="disulfide bond" evidence="6">
    <location>
        <begin position="110"/>
        <end position="187"/>
    </location>
</feature>
<sequence length="354" mass="39513">MNGTEGENFYVPMSNKTGVVRNPFEYPQYYLADHWMFAVLAAYMFFLIITGFPVNFLTLFVTIQNKKLRQPLNYILLNLAVANLFMVFGGFTTTLITSMNGYFVFGSTGCNLEGFFATLGGEISLWSLVVLAIERYVVVCKPMSNFRFGSQHAIAGVSLTWVMAMACAAPPLVGWSRYIPEGLQCSCGIDYYTPKPEINNVSFVIYMFVVHFSIPLTIIFFCYGRLVCTVKAAAAQQQESETTQRAEREVTRMVVIMVIGFLICWLPYASVALYIFNNQGSEFGPVFMTIPSFFAKSSALYNPLIYILMNKQFRNCMITTLCCGKNPFEEEESTSASASKTEASSVSSSQVSPA</sequence>
<reference key="1">
    <citation type="submission" date="1998-06" db="EMBL/GenBank/DDBJ databases">
        <title>Adaptational features of the photoreceptor system in the retinae of two species of dogfish: relationships with feeding habits and depth distribution.</title>
        <authorList>
            <person name="Bozzano A."/>
            <person name="Murgia R."/>
            <person name="Vallerga S."/>
            <person name="Hirano J."/>
            <person name="Archer S.N."/>
        </authorList>
    </citation>
    <scope>NUCLEOTIDE SEQUENCE [MRNA]</scope>
    <source>
        <tissue>Retina</tissue>
    </source>
</reference>
<evidence type="ECO:0000250" key="1">
    <source>
        <dbReference type="UniProtKB" id="P02699"/>
    </source>
</evidence>
<evidence type="ECO:0000250" key="2">
    <source>
        <dbReference type="UniProtKB" id="P08100"/>
    </source>
</evidence>
<evidence type="ECO:0000250" key="3">
    <source>
        <dbReference type="UniProtKB" id="P32309"/>
    </source>
</evidence>
<evidence type="ECO:0000250" key="4">
    <source>
        <dbReference type="UniProtKB" id="P35359"/>
    </source>
</evidence>
<evidence type="ECO:0000255" key="5"/>
<evidence type="ECO:0000255" key="6">
    <source>
        <dbReference type="PROSITE-ProRule" id="PRU00521"/>
    </source>
</evidence>
<evidence type="ECO:0000256" key="7">
    <source>
        <dbReference type="SAM" id="MobiDB-lite"/>
    </source>
</evidence>
<evidence type="ECO:0000305" key="8"/>
<protein>
    <recommendedName>
        <fullName>Rhodopsin</fullName>
    </recommendedName>
</protein>
<keyword id="KW-0966">Cell projection</keyword>
<keyword id="KW-0157">Chromophore</keyword>
<keyword id="KW-1015">Disulfide bond</keyword>
<keyword id="KW-0297">G-protein coupled receptor</keyword>
<keyword id="KW-0325">Glycoprotein</keyword>
<keyword id="KW-0449">Lipoprotein</keyword>
<keyword id="KW-0472">Membrane</keyword>
<keyword id="KW-0564">Palmitate</keyword>
<keyword id="KW-0597">Phosphoprotein</keyword>
<keyword id="KW-0600">Photoreceptor protein</keyword>
<keyword id="KW-0675">Receptor</keyword>
<keyword id="KW-0681">Retinal protein</keyword>
<keyword id="KW-0716">Sensory transduction</keyword>
<keyword id="KW-0807">Transducer</keyword>
<keyword id="KW-0812">Transmembrane</keyword>
<keyword id="KW-1133">Transmembrane helix</keyword>
<keyword id="KW-0844">Vision</keyword>
<proteinExistence type="evidence at transcript level"/>
<comment type="function">
    <text evidence="1 2 3">Photoreceptor required for image-forming vision at low light intensity. While most salt water fish species use retinal as chromophore, most freshwater fish use 3-dehydroretinal, or a mixture of retinal and 3-dehydroretinal (By similarity). Light-induced isomerization of 11-cis to all-trans retinal triggers a conformational change that activates signaling via G-proteins. Subsequent receptor phosphorylation mediates displacement of the bound G-protein alpha subunit by arrestin and terminates signaling (By similarity).</text>
</comment>
<comment type="subcellular location">
    <subcellularLocation>
        <location evidence="2">Membrane</location>
        <topology evidence="2">Multi-pass membrane protein</topology>
    </subcellularLocation>
    <subcellularLocation>
        <location evidence="4">Cell projection</location>
        <location evidence="4">Cilium</location>
        <location evidence="4">Photoreceptor outer segment</location>
    </subcellularLocation>
    <text evidence="2">Synthesized in the inner segment (IS) of rod photoreceptor cells before vectorial transport to disk membranes in the rod outer segment (OS) photosensory cilia.</text>
</comment>
<comment type="PTM">
    <text evidence="1">Phosphorylated on some or all of the serine and threonine residues present in the C-terminal region.</text>
</comment>
<comment type="PTM">
    <text evidence="1">Contains one covalently linked retinal chromophore.</text>
</comment>
<comment type="similarity">
    <text evidence="6">Belongs to the G-protein coupled receptor 1 family. Opsin subfamily.</text>
</comment>